<organism>
    <name type="scientific">Methylocella silvestris (strain DSM 15510 / CIP 108128 / LMG 27833 / NCIMB 13906 / BL2)</name>
    <dbReference type="NCBI Taxonomy" id="395965"/>
    <lineage>
        <taxon>Bacteria</taxon>
        <taxon>Pseudomonadati</taxon>
        <taxon>Pseudomonadota</taxon>
        <taxon>Alphaproteobacteria</taxon>
        <taxon>Hyphomicrobiales</taxon>
        <taxon>Beijerinckiaceae</taxon>
        <taxon>Methylocella</taxon>
    </lineage>
</organism>
<gene>
    <name evidence="1" type="primary">purL</name>
    <name type="ordered locus">Msil_1184</name>
</gene>
<evidence type="ECO:0000255" key="1">
    <source>
        <dbReference type="HAMAP-Rule" id="MF_00420"/>
    </source>
</evidence>
<name>PURL_METSB</name>
<dbReference type="EC" id="6.3.5.3" evidence="1"/>
<dbReference type="EMBL" id="CP001280">
    <property type="protein sequence ID" value="ACK50153.1"/>
    <property type="molecule type" value="Genomic_DNA"/>
</dbReference>
<dbReference type="RefSeq" id="WP_012590223.1">
    <property type="nucleotide sequence ID" value="NC_011666.1"/>
</dbReference>
<dbReference type="SMR" id="B8EPE8"/>
<dbReference type="STRING" id="395965.Msil_1184"/>
<dbReference type="KEGG" id="msl:Msil_1184"/>
<dbReference type="eggNOG" id="COG0046">
    <property type="taxonomic scope" value="Bacteria"/>
</dbReference>
<dbReference type="HOGENOM" id="CLU_003100_0_1_5"/>
<dbReference type="OrthoDB" id="9804441at2"/>
<dbReference type="UniPathway" id="UPA00074">
    <property type="reaction ID" value="UER00128"/>
</dbReference>
<dbReference type="Proteomes" id="UP000002257">
    <property type="component" value="Chromosome"/>
</dbReference>
<dbReference type="GO" id="GO:0005737">
    <property type="term" value="C:cytoplasm"/>
    <property type="evidence" value="ECO:0007669"/>
    <property type="project" value="UniProtKB-SubCell"/>
</dbReference>
<dbReference type="GO" id="GO:0005524">
    <property type="term" value="F:ATP binding"/>
    <property type="evidence" value="ECO:0007669"/>
    <property type="project" value="UniProtKB-UniRule"/>
</dbReference>
<dbReference type="GO" id="GO:0000287">
    <property type="term" value="F:magnesium ion binding"/>
    <property type="evidence" value="ECO:0007669"/>
    <property type="project" value="UniProtKB-UniRule"/>
</dbReference>
<dbReference type="GO" id="GO:0004642">
    <property type="term" value="F:phosphoribosylformylglycinamidine synthase activity"/>
    <property type="evidence" value="ECO:0007669"/>
    <property type="project" value="UniProtKB-UniRule"/>
</dbReference>
<dbReference type="GO" id="GO:0006189">
    <property type="term" value="P:'de novo' IMP biosynthetic process"/>
    <property type="evidence" value="ECO:0007669"/>
    <property type="project" value="UniProtKB-UniRule"/>
</dbReference>
<dbReference type="CDD" id="cd02203">
    <property type="entry name" value="PurL_repeat1"/>
    <property type="match status" value="1"/>
</dbReference>
<dbReference type="CDD" id="cd02204">
    <property type="entry name" value="PurL_repeat2"/>
    <property type="match status" value="1"/>
</dbReference>
<dbReference type="FunFam" id="3.30.1330.10:FF:000004">
    <property type="entry name" value="Phosphoribosylformylglycinamidine synthase subunit PurL"/>
    <property type="match status" value="1"/>
</dbReference>
<dbReference type="Gene3D" id="3.90.650.10">
    <property type="entry name" value="PurM-like C-terminal domain"/>
    <property type="match status" value="2"/>
</dbReference>
<dbReference type="Gene3D" id="3.30.1330.10">
    <property type="entry name" value="PurM-like, N-terminal domain"/>
    <property type="match status" value="2"/>
</dbReference>
<dbReference type="HAMAP" id="MF_00420">
    <property type="entry name" value="PurL_2"/>
    <property type="match status" value="1"/>
</dbReference>
<dbReference type="InterPro" id="IPR010074">
    <property type="entry name" value="PRibForGlyAmidine_synth_PurL"/>
</dbReference>
<dbReference type="InterPro" id="IPR041609">
    <property type="entry name" value="PurL_linker"/>
</dbReference>
<dbReference type="InterPro" id="IPR010918">
    <property type="entry name" value="PurM-like_C_dom"/>
</dbReference>
<dbReference type="InterPro" id="IPR036676">
    <property type="entry name" value="PurM-like_C_sf"/>
</dbReference>
<dbReference type="InterPro" id="IPR016188">
    <property type="entry name" value="PurM-like_N"/>
</dbReference>
<dbReference type="InterPro" id="IPR036921">
    <property type="entry name" value="PurM-like_N_sf"/>
</dbReference>
<dbReference type="NCBIfam" id="TIGR01736">
    <property type="entry name" value="FGAM_synth_II"/>
    <property type="match status" value="1"/>
</dbReference>
<dbReference type="NCBIfam" id="NF002290">
    <property type="entry name" value="PRK01213.1"/>
    <property type="match status" value="1"/>
</dbReference>
<dbReference type="PANTHER" id="PTHR43555">
    <property type="entry name" value="PHOSPHORIBOSYLFORMYLGLYCINAMIDINE SYNTHASE SUBUNIT PURL"/>
    <property type="match status" value="1"/>
</dbReference>
<dbReference type="PANTHER" id="PTHR43555:SF1">
    <property type="entry name" value="PHOSPHORIBOSYLFORMYLGLYCINAMIDINE SYNTHASE SUBUNIT PURL"/>
    <property type="match status" value="1"/>
</dbReference>
<dbReference type="Pfam" id="PF00586">
    <property type="entry name" value="AIRS"/>
    <property type="match status" value="2"/>
</dbReference>
<dbReference type="Pfam" id="PF02769">
    <property type="entry name" value="AIRS_C"/>
    <property type="match status" value="2"/>
</dbReference>
<dbReference type="Pfam" id="PF18072">
    <property type="entry name" value="FGAR-AT_linker"/>
    <property type="match status" value="1"/>
</dbReference>
<dbReference type="PIRSF" id="PIRSF001587">
    <property type="entry name" value="FGAM_synthase_II"/>
    <property type="match status" value="1"/>
</dbReference>
<dbReference type="SUPFAM" id="SSF56042">
    <property type="entry name" value="PurM C-terminal domain-like"/>
    <property type="match status" value="2"/>
</dbReference>
<dbReference type="SUPFAM" id="SSF55326">
    <property type="entry name" value="PurM N-terminal domain-like"/>
    <property type="match status" value="2"/>
</dbReference>
<protein>
    <recommendedName>
        <fullName evidence="1">Phosphoribosylformylglycinamidine synthase subunit PurL</fullName>
        <shortName evidence="1">FGAM synthase</shortName>
        <ecNumber evidence="1">6.3.5.3</ecNumber>
    </recommendedName>
    <alternativeName>
        <fullName evidence="1">Formylglycinamide ribonucleotide amidotransferase subunit II</fullName>
        <shortName evidence="1">FGAR amidotransferase II</shortName>
        <shortName evidence="1">FGAR-AT II</shortName>
    </alternativeName>
    <alternativeName>
        <fullName evidence="1">Glutamine amidotransferase PurL</fullName>
    </alternativeName>
    <alternativeName>
        <fullName evidence="1">Phosphoribosylformylglycinamidine synthase subunit II</fullName>
    </alternativeName>
</protein>
<feature type="chain" id="PRO_1000134902" description="Phosphoribosylformylglycinamidine synthase subunit PurL">
    <location>
        <begin position="1"/>
        <end position="735"/>
    </location>
</feature>
<feature type="active site" evidence="1">
    <location>
        <position position="49"/>
    </location>
</feature>
<feature type="active site" description="Proton acceptor" evidence="1">
    <location>
        <position position="95"/>
    </location>
</feature>
<feature type="binding site" evidence="1">
    <location>
        <position position="52"/>
    </location>
    <ligand>
        <name>ATP</name>
        <dbReference type="ChEBI" id="CHEBI:30616"/>
    </ligand>
</feature>
<feature type="binding site" evidence="1">
    <location>
        <position position="91"/>
    </location>
    <ligand>
        <name>ATP</name>
        <dbReference type="ChEBI" id="CHEBI:30616"/>
    </ligand>
</feature>
<feature type="binding site" evidence="1">
    <location>
        <position position="93"/>
    </location>
    <ligand>
        <name>Mg(2+)</name>
        <dbReference type="ChEBI" id="CHEBI:18420"/>
        <label>1</label>
    </ligand>
</feature>
<feature type="binding site" evidence="1">
    <location>
        <begin position="94"/>
        <end position="97"/>
    </location>
    <ligand>
        <name>substrate</name>
    </ligand>
</feature>
<feature type="binding site" evidence="1">
    <location>
        <position position="116"/>
    </location>
    <ligand>
        <name>substrate</name>
    </ligand>
</feature>
<feature type="binding site" evidence="1">
    <location>
        <position position="117"/>
    </location>
    <ligand>
        <name>Mg(2+)</name>
        <dbReference type="ChEBI" id="CHEBI:18420"/>
        <label>2</label>
    </ligand>
</feature>
<feature type="binding site" evidence="1">
    <location>
        <position position="240"/>
    </location>
    <ligand>
        <name>substrate</name>
    </ligand>
</feature>
<feature type="binding site" evidence="1">
    <location>
        <position position="268"/>
    </location>
    <ligand>
        <name>Mg(2+)</name>
        <dbReference type="ChEBI" id="CHEBI:18420"/>
        <label>2</label>
    </ligand>
</feature>
<feature type="binding site" evidence="1">
    <location>
        <begin position="312"/>
        <end position="314"/>
    </location>
    <ligand>
        <name>substrate</name>
    </ligand>
</feature>
<feature type="binding site" evidence="1">
    <location>
        <position position="493"/>
    </location>
    <ligand>
        <name>ATP</name>
        <dbReference type="ChEBI" id="CHEBI:30616"/>
    </ligand>
</feature>
<feature type="binding site" evidence="1">
    <location>
        <position position="530"/>
    </location>
    <ligand>
        <name>ATP</name>
        <dbReference type="ChEBI" id="CHEBI:30616"/>
    </ligand>
</feature>
<feature type="binding site" evidence="1">
    <location>
        <position position="531"/>
    </location>
    <ligand>
        <name>Mg(2+)</name>
        <dbReference type="ChEBI" id="CHEBI:18420"/>
        <label>1</label>
    </ligand>
</feature>
<feature type="binding site" evidence="1">
    <location>
        <position position="533"/>
    </location>
    <ligand>
        <name>substrate</name>
    </ligand>
</feature>
<keyword id="KW-0067">ATP-binding</keyword>
<keyword id="KW-0963">Cytoplasm</keyword>
<keyword id="KW-0436">Ligase</keyword>
<keyword id="KW-0460">Magnesium</keyword>
<keyword id="KW-0479">Metal-binding</keyword>
<keyword id="KW-0547">Nucleotide-binding</keyword>
<keyword id="KW-0658">Purine biosynthesis</keyword>
<keyword id="KW-1185">Reference proteome</keyword>
<proteinExistence type="inferred from homology"/>
<comment type="function">
    <text evidence="1">Part of the phosphoribosylformylglycinamidine synthase complex involved in the purines biosynthetic pathway. Catalyzes the ATP-dependent conversion of formylglycinamide ribonucleotide (FGAR) and glutamine to yield formylglycinamidine ribonucleotide (FGAM) and glutamate. The FGAM synthase complex is composed of three subunits. PurQ produces an ammonia molecule by converting glutamine to glutamate. PurL transfers the ammonia molecule to FGAR to form FGAM in an ATP-dependent manner. PurS interacts with PurQ and PurL and is thought to assist in the transfer of the ammonia molecule from PurQ to PurL.</text>
</comment>
<comment type="catalytic activity">
    <reaction evidence="1">
        <text>N(2)-formyl-N(1)-(5-phospho-beta-D-ribosyl)glycinamide + L-glutamine + ATP + H2O = 2-formamido-N(1)-(5-O-phospho-beta-D-ribosyl)acetamidine + L-glutamate + ADP + phosphate + H(+)</text>
        <dbReference type="Rhea" id="RHEA:17129"/>
        <dbReference type="ChEBI" id="CHEBI:15377"/>
        <dbReference type="ChEBI" id="CHEBI:15378"/>
        <dbReference type="ChEBI" id="CHEBI:29985"/>
        <dbReference type="ChEBI" id="CHEBI:30616"/>
        <dbReference type="ChEBI" id="CHEBI:43474"/>
        <dbReference type="ChEBI" id="CHEBI:58359"/>
        <dbReference type="ChEBI" id="CHEBI:147286"/>
        <dbReference type="ChEBI" id="CHEBI:147287"/>
        <dbReference type="ChEBI" id="CHEBI:456216"/>
        <dbReference type="EC" id="6.3.5.3"/>
    </reaction>
</comment>
<comment type="pathway">
    <text evidence="1">Purine metabolism; IMP biosynthesis via de novo pathway; 5-amino-1-(5-phospho-D-ribosyl)imidazole from N(2)-formyl-N(1)-(5-phospho-D-ribosyl)glycinamide: step 1/2.</text>
</comment>
<comment type="subunit">
    <text evidence="1">Monomer. Part of the FGAM synthase complex composed of 1 PurL, 1 PurQ and 2 PurS subunits.</text>
</comment>
<comment type="subcellular location">
    <subcellularLocation>
        <location evidence="1">Cytoplasm</location>
    </subcellularLocation>
</comment>
<comment type="similarity">
    <text evidence="1">Belongs to the FGAMS family.</text>
</comment>
<reference key="1">
    <citation type="journal article" date="2010" name="J. Bacteriol.">
        <title>Complete genome sequence of the aerobic facultative methanotroph Methylocella silvestris BL2.</title>
        <authorList>
            <person name="Chen Y."/>
            <person name="Crombie A."/>
            <person name="Rahman M.T."/>
            <person name="Dedysh S.N."/>
            <person name="Liesack W."/>
            <person name="Stott M.B."/>
            <person name="Alam M."/>
            <person name="Theisen A.R."/>
            <person name="Murrell J.C."/>
            <person name="Dunfield P.F."/>
        </authorList>
    </citation>
    <scope>NUCLEOTIDE SEQUENCE [LARGE SCALE GENOMIC DNA]</scope>
    <source>
        <strain>DSM 15510 / CIP 108128 / LMG 27833 / NCIMB 13906 / BL2</strain>
    </source>
</reference>
<accession>B8EPE8</accession>
<sequence>MPRQDPAVTPELVASHGLKPDEYQRILDLIGRVPTFTELGIFSAMWNEHCSYKSSRLHLRALPTKAPWVIQGPGENAGVIDIGDGEACVFKMESHNHPSYIEPFQGAATGVGGILRDVFTMGARPVACLNLLRFGAPEHPKTRHLVSGVVAGIGSYGNSFGVPTVGGATAFHMGYDGNILVNAMAVGIARADEIFYAKATGIGNPIVYLGSKTGRDGIHGATMASAAFEEDAEAKRPTVQVGDPFTEKLLLEACLELMRTGAVIAIQDMGAAGLTSSAVEMGAKGDLGIELDLDAVPCRETGMSAYEMLLSESQERMLMVLDPQKEAEAKAVFVKWGLDFAIIGKTTDTLRFVVKHEGEVKADLPIKQLGDAAPLYDRPHIASPALEKIEAAAIEPPLSNAGALALLLATPDLCSKRWIYEQYDHLILGNSVETPGGDAAVIRLGDGPKGLALTTDVTPRYCEADPVAGGRQAVAEAWRNLTAVGALPRAVTDNLNFGNPEKPEIMGQFVGCLTGIGEACRALDFPIVSGNVSLYNESSGKGIPPTPSIGGVGVIADVGLAAKLAFRRAGDAILLIGDTEGWLGQSLYLRDVCGREAGAPPPVDLAAEKRNGDFVRELIRAALVSAVHDISDGGLAVALAEMAMAGGVGASVEAPANVPAHGFWFGEDQSRYIVATSPERALGVLAAAQRAGVPCRRIGETGGAALTLKGEAAILIADLSARFEGWLPDYMAAAL</sequence>